<gene>
    <name evidence="1" type="primary">def</name>
</gene>
<name>DEF_MICDP</name>
<proteinExistence type="inferred from homology"/>
<evidence type="ECO:0000255" key="1">
    <source>
        <dbReference type="HAMAP-Rule" id="MF_00163"/>
    </source>
</evidence>
<accession>P94601</accession>
<organism>
    <name type="scientific">Microchaete diplosiphon</name>
    <name type="common">Fremyella diplosiphon</name>
    <dbReference type="NCBI Taxonomy" id="1197"/>
    <lineage>
        <taxon>Bacteria</taxon>
        <taxon>Bacillati</taxon>
        <taxon>Cyanobacteriota</taxon>
        <taxon>Cyanophyceae</taxon>
        <taxon>Nostocales</taxon>
        <taxon>Rivulariaceae</taxon>
        <taxon>Microchaete</taxon>
    </lineage>
</organism>
<reference key="1">
    <citation type="journal article" date="1997" name="J. Mol. Biol.">
        <title>A survey of polypeptide deformylase function throughout the eubacterial lineage.</title>
        <authorList>
            <person name="Mazel D."/>
            <person name="Coic E."/>
            <person name="Blanchard S."/>
            <person name="Saurin W."/>
            <person name="Marliere P."/>
        </authorList>
    </citation>
    <scope>NUCLEOTIDE SEQUENCE [GENOMIC DNA]</scope>
</reference>
<feature type="chain" id="PRO_0000082783" description="Peptide deformylase">
    <location>
        <begin position="1"/>
        <end position="187"/>
    </location>
</feature>
<feature type="active site" evidence="1">
    <location>
        <position position="150"/>
    </location>
</feature>
<feature type="binding site" evidence="1">
    <location>
        <position position="107"/>
    </location>
    <ligand>
        <name>Fe cation</name>
        <dbReference type="ChEBI" id="CHEBI:24875"/>
    </ligand>
</feature>
<feature type="binding site" evidence="1">
    <location>
        <position position="149"/>
    </location>
    <ligand>
        <name>Fe cation</name>
        <dbReference type="ChEBI" id="CHEBI:24875"/>
    </ligand>
</feature>
<feature type="binding site" evidence="1">
    <location>
        <position position="153"/>
    </location>
    <ligand>
        <name>Fe cation</name>
        <dbReference type="ChEBI" id="CHEBI:24875"/>
    </ligand>
</feature>
<protein>
    <recommendedName>
        <fullName evidence="1">Peptide deformylase</fullName>
        <shortName evidence="1">PDF</shortName>
        <ecNumber evidence="1">3.5.1.88</ecNumber>
    </recommendedName>
    <alternativeName>
        <fullName evidence="1">Polypeptide deformylase</fullName>
    </alternativeName>
</protein>
<dbReference type="EC" id="3.5.1.88" evidence="1"/>
<dbReference type="EMBL" id="Y10305">
    <property type="protein sequence ID" value="CAA71353.1"/>
    <property type="molecule type" value="Genomic_DNA"/>
</dbReference>
<dbReference type="SMR" id="P94601"/>
<dbReference type="GO" id="GO:0046872">
    <property type="term" value="F:metal ion binding"/>
    <property type="evidence" value="ECO:0007669"/>
    <property type="project" value="UniProtKB-KW"/>
</dbReference>
<dbReference type="GO" id="GO:0042586">
    <property type="term" value="F:peptide deformylase activity"/>
    <property type="evidence" value="ECO:0007669"/>
    <property type="project" value="UniProtKB-UniRule"/>
</dbReference>
<dbReference type="GO" id="GO:0043686">
    <property type="term" value="P:co-translational protein modification"/>
    <property type="evidence" value="ECO:0007669"/>
    <property type="project" value="TreeGrafter"/>
</dbReference>
<dbReference type="GO" id="GO:0006412">
    <property type="term" value="P:translation"/>
    <property type="evidence" value="ECO:0007669"/>
    <property type="project" value="UniProtKB-UniRule"/>
</dbReference>
<dbReference type="CDD" id="cd00487">
    <property type="entry name" value="Pep_deformylase"/>
    <property type="match status" value="1"/>
</dbReference>
<dbReference type="FunFam" id="3.90.45.10:FF:000005">
    <property type="entry name" value="Peptide deformylase"/>
    <property type="match status" value="1"/>
</dbReference>
<dbReference type="Gene3D" id="3.90.45.10">
    <property type="entry name" value="Peptide deformylase"/>
    <property type="match status" value="1"/>
</dbReference>
<dbReference type="HAMAP" id="MF_00163">
    <property type="entry name" value="Pep_deformylase"/>
    <property type="match status" value="1"/>
</dbReference>
<dbReference type="InterPro" id="IPR023635">
    <property type="entry name" value="Peptide_deformylase"/>
</dbReference>
<dbReference type="InterPro" id="IPR036821">
    <property type="entry name" value="Peptide_deformylase_sf"/>
</dbReference>
<dbReference type="NCBIfam" id="TIGR00079">
    <property type="entry name" value="pept_deformyl"/>
    <property type="match status" value="1"/>
</dbReference>
<dbReference type="NCBIfam" id="NF001159">
    <property type="entry name" value="PRK00150.1-3"/>
    <property type="match status" value="1"/>
</dbReference>
<dbReference type="PANTHER" id="PTHR10458">
    <property type="entry name" value="PEPTIDE DEFORMYLASE"/>
    <property type="match status" value="1"/>
</dbReference>
<dbReference type="PANTHER" id="PTHR10458:SF22">
    <property type="entry name" value="PEPTIDE DEFORMYLASE"/>
    <property type="match status" value="1"/>
</dbReference>
<dbReference type="Pfam" id="PF01327">
    <property type="entry name" value="Pep_deformylase"/>
    <property type="match status" value="1"/>
</dbReference>
<dbReference type="PIRSF" id="PIRSF004749">
    <property type="entry name" value="Pep_def"/>
    <property type="match status" value="1"/>
</dbReference>
<dbReference type="PRINTS" id="PR01576">
    <property type="entry name" value="PDEFORMYLASE"/>
</dbReference>
<dbReference type="SUPFAM" id="SSF56420">
    <property type="entry name" value="Peptide deformylase"/>
    <property type="match status" value="1"/>
</dbReference>
<sequence>MPSEIAVEKKKLKNPPLQLHYLGDRVLRQPAKRIAKVDDELRQLIRDMLQTMYSKDGIGLAAPQVGIHKQLIVIDLEPDNPANPPLVLINPTIKQVSKEICVAQEGCLSIPNVYMDVKRPEVVEIAYKDENGRPKTLKATDLLARCIQHEMDHLNGVVFVDRVDNSLTLAQELSKNGFSYQAVKPVA</sequence>
<keyword id="KW-0378">Hydrolase</keyword>
<keyword id="KW-0408">Iron</keyword>
<keyword id="KW-0479">Metal-binding</keyword>
<keyword id="KW-0648">Protein biosynthesis</keyword>
<comment type="function">
    <text evidence="1">Removes the formyl group from the N-terminal Met of newly synthesized proteins. Requires at least a dipeptide for an efficient rate of reaction. N-terminal L-methionine is a prerequisite for activity but the enzyme has broad specificity at other positions.</text>
</comment>
<comment type="catalytic activity">
    <reaction evidence="1">
        <text>N-terminal N-formyl-L-methionyl-[peptide] + H2O = N-terminal L-methionyl-[peptide] + formate</text>
        <dbReference type="Rhea" id="RHEA:24420"/>
        <dbReference type="Rhea" id="RHEA-COMP:10639"/>
        <dbReference type="Rhea" id="RHEA-COMP:10640"/>
        <dbReference type="ChEBI" id="CHEBI:15377"/>
        <dbReference type="ChEBI" id="CHEBI:15740"/>
        <dbReference type="ChEBI" id="CHEBI:49298"/>
        <dbReference type="ChEBI" id="CHEBI:64731"/>
        <dbReference type="EC" id="3.5.1.88"/>
    </reaction>
</comment>
<comment type="cofactor">
    <cofactor evidence="1">
        <name>Fe(2+)</name>
        <dbReference type="ChEBI" id="CHEBI:29033"/>
    </cofactor>
    <text evidence="1">Binds 1 Fe(2+) ion.</text>
</comment>
<comment type="similarity">
    <text evidence="1">Belongs to the polypeptide deformylase family.</text>
</comment>